<dbReference type="EMBL" id="CP000025">
    <property type="protein sequence ID" value="AAW35227.1"/>
    <property type="molecule type" value="Genomic_DNA"/>
</dbReference>
<dbReference type="RefSeq" id="WP_002856927.1">
    <property type="nucleotide sequence ID" value="NC_003912.7"/>
</dbReference>
<dbReference type="SMR" id="Q5HUZ3"/>
<dbReference type="KEGG" id="cjr:CJE0890"/>
<dbReference type="HOGENOM" id="CLU_087936_3_1_7"/>
<dbReference type="GO" id="GO:0005737">
    <property type="term" value="C:cytoplasm"/>
    <property type="evidence" value="ECO:0007669"/>
    <property type="project" value="UniProtKB-SubCell"/>
</dbReference>
<dbReference type="GO" id="GO:0009379">
    <property type="term" value="C:Holliday junction helicase complex"/>
    <property type="evidence" value="ECO:0007669"/>
    <property type="project" value="InterPro"/>
</dbReference>
<dbReference type="GO" id="GO:0048476">
    <property type="term" value="C:Holliday junction resolvase complex"/>
    <property type="evidence" value="ECO:0007669"/>
    <property type="project" value="UniProtKB-UniRule"/>
</dbReference>
<dbReference type="GO" id="GO:0005524">
    <property type="term" value="F:ATP binding"/>
    <property type="evidence" value="ECO:0007669"/>
    <property type="project" value="InterPro"/>
</dbReference>
<dbReference type="GO" id="GO:0000400">
    <property type="term" value="F:four-way junction DNA binding"/>
    <property type="evidence" value="ECO:0007669"/>
    <property type="project" value="UniProtKB-UniRule"/>
</dbReference>
<dbReference type="GO" id="GO:0009378">
    <property type="term" value="F:four-way junction helicase activity"/>
    <property type="evidence" value="ECO:0007669"/>
    <property type="project" value="InterPro"/>
</dbReference>
<dbReference type="GO" id="GO:0006310">
    <property type="term" value="P:DNA recombination"/>
    <property type="evidence" value="ECO:0007669"/>
    <property type="project" value="UniProtKB-UniRule"/>
</dbReference>
<dbReference type="GO" id="GO:0006281">
    <property type="term" value="P:DNA repair"/>
    <property type="evidence" value="ECO:0007669"/>
    <property type="project" value="UniProtKB-UniRule"/>
</dbReference>
<dbReference type="CDD" id="cd14332">
    <property type="entry name" value="UBA_RuvA_C"/>
    <property type="match status" value="1"/>
</dbReference>
<dbReference type="Gene3D" id="1.10.150.20">
    <property type="entry name" value="5' to 3' exonuclease, C-terminal subdomain"/>
    <property type="match status" value="1"/>
</dbReference>
<dbReference type="Gene3D" id="1.10.8.10">
    <property type="entry name" value="DNA helicase RuvA subunit, C-terminal domain"/>
    <property type="match status" value="1"/>
</dbReference>
<dbReference type="Gene3D" id="2.40.50.140">
    <property type="entry name" value="Nucleic acid-binding proteins"/>
    <property type="match status" value="1"/>
</dbReference>
<dbReference type="HAMAP" id="MF_00031">
    <property type="entry name" value="DNA_HJ_migration_RuvA"/>
    <property type="match status" value="1"/>
</dbReference>
<dbReference type="InterPro" id="IPR013849">
    <property type="entry name" value="DNA_helicase_Holl-junc_RuvA_I"/>
</dbReference>
<dbReference type="InterPro" id="IPR003583">
    <property type="entry name" value="Hlx-hairpin-Hlx_DNA-bd_motif"/>
</dbReference>
<dbReference type="InterPro" id="IPR012340">
    <property type="entry name" value="NA-bd_OB-fold"/>
</dbReference>
<dbReference type="InterPro" id="IPR000085">
    <property type="entry name" value="RuvA"/>
</dbReference>
<dbReference type="InterPro" id="IPR010994">
    <property type="entry name" value="RuvA_2-like"/>
</dbReference>
<dbReference type="InterPro" id="IPR011114">
    <property type="entry name" value="RuvA_C"/>
</dbReference>
<dbReference type="InterPro" id="IPR036267">
    <property type="entry name" value="RuvA_C_sf"/>
</dbReference>
<dbReference type="NCBIfam" id="TIGR00084">
    <property type="entry name" value="ruvA"/>
    <property type="match status" value="1"/>
</dbReference>
<dbReference type="Pfam" id="PF14520">
    <property type="entry name" value="HHH_5"/>
    <property type="match status" value="1"/>
</dbReference>
<dbReference type="Pfam" id="PF07499">
    <property type="entry name" value="RuvA_C"/>
    <property type="match status" value="1"/>
</dbReference>
<dbReference type="Pfam" id="PF01330">
    <property type="entry name" value="RuvA_N"/>
    <property type="match status" value="1"/>
</dbReference>
<dbReference type="SMART" id="SM00278">
    <property type="entry name" value="HhH1"/>
    <property type="match status" value="2"/>
</dbReference>
<dbReference type="SUPFAM" id="SSF46929">
    <property type="entry name" value="DNA helicase RuvA subunit, C-terminal domain"/>
    <property type="match status" value="1"/>
</dbReference>
<dbReference type="SUPFAM" id="SSF50249">
    <property type="entry name" value="Nucleic acid-binding proteins"/>
    <property type="match status" value="1"/>
</dbReference>
<dbReference type="SUPFAM" id="SSF47781">
    <property type="entry name" value="RuvA domain 2-like"/>
    <property type="match status" value="1"/>
</dbReference>
<reference key="1">
    <citation type="journal article" date="2005" name="PLoS Biol.">
        <title>Major structural differences and novel potential virulence mechanisms from the genomes of multiple Campylobacter species.</title>
        <authorList>
            <person name="Fouts D.E."/>
            <person name="Mongodin E.F."/>
            <person name="Mandrell R.E."/>
            <person name="Miller W.G."/>
            <person name="Rasko D.A."/>
            <person name="Ravel J."/>
            <person name="Brinkac L.M."/>
            <person name="DeBoy R.T."/>
            <person name="Parker C.T."/>
            <person name="Daugherty S.C."/>
            <person name="Dodson R.J."/>
            <person name="Durkin A.S."/>
            <person name="Madupu R."/>
            <person name="Sullivan S.A."/>
            <person name="Shetty J.U."/>
            <person name="Ayodeji M.A."/>
            <person name="Shvartsbeyn A."/>
            <person name="Schatz M.C."/>
            <person name="Badger J.H."/>
            <person name="Fraser C.M."/>
            <person name="Nelson K.E."/>
        </authorList>
    </citation>
    <scope>NUCLEOTIDE SEQUENCE [LARGE SCALE GENOMIC DNA]</scope>
    <source>
        <strain>RM1221</strain>
    </source>
</reference>
<name>RUVA_CAMJR</name>
<protein>
    <recommendedName>
        <fullName evidence="1">Holliday junction branch migration complex subunit RuvA</fullName>
    </recommendedName>
</protein>
<proteinExistence type="inferred from homology"/>
<keyword id="KW-0963">Cytoplasm</keyword>
<keyword id="KW-0227">DNA damage</keyword>
<keyword id="KW-0233">DNA recombination</keyword>
<keyword id="KW-0234">DNA repair</keyword>
<keyword id="KW-0238">DNA-binding</keyword>
<sequence length="183" mass="19905">MVVGIEGIITKKEPTFIIVKCASGLSYGIFISLFCSAKIQTQEKHEFFITQIIKEDSNKFYGFLDKDEQKMFEMLLKVNGVGANTAMAVCSSLDVNSFYKALSLGDESVLKKVPGIGPKSAKRIIVELSDTKTKLENVSDDKSEALAALLTLGFKQEKIISVLASAQATGTSELIKEALKKLG</sequence>
<evidence type="ECO:0000255" key="1">
    <source>
        <dbReference type="HAMAP-Rule" id="MF_00031"/>
    </source>
</evidence>
<gene>
    <name evidence="1" type="primary">ruvA</name>
    <name type="ordered locus">CJE0890</name>
</gene>
<accession>Q5HUZ3</accession>
<organism>
    <name type="scientific">Campylobacter jejuni (strain RM1221)</name>
    <dbReference type="NCBI Taxonomy" id="195099"/>
    <lineage>
        <taxon>Bacteria</taxon>
        <taxon>Pseudomonadati</taxon>
        <taxon>Campylobacterota</taxon>
        <taxon>Epsilonproteobacteria</taxon>
        <taxon>Campylobacterales</taxon>
        <taxon>Campylobacteraceae</taxon>
        <taxon>Campylobacter</taxon>
    </lineage>
</organism>
<feature type="chain" id="PRO_0000094613" description="Holliday junction branch migration complex subunit RuvA">
    <location>
        <begin position="1"/>
        <end position="183"/>
    </location>
</feature>
<feature type="region of interest" description="Domain I" evidence="1">
    <location>
        <begin position="1"/>
        <end position="64"/>
    </location>
</feature>
<feature type="region of interest" description="Domain II" evidence="1">
    <location>
        <begin position="65"/>
        <end position="139"/>
    </location>
</feature>
<feature type="region of interest" description="Domain III" evidence="1">
    <location>
        <begin position="139"/>
        <end position="183"/>
    </location>
</feature>
<feature type="region of interest" description="Flexible linker" evidence="1">
    <location>
        <position position="139"/>
    </location>
</feature>
<comment type="function">
    <text evidence="1">The RuvA-RuvB-RuvC complex processes Holliday junction (HJ) DNA during genetic recombination and DNA repair, while the RuvA-RuvB complex plays an important role in the rescue of blocked DNA replication forks via replication fork reversal (RFR). RuvA specifically binds to HJ cruciform DNA, conferring on it an open structure. The RuvB hexamer acts as an ATP-dependent pump, pulling dsDNA into and through the RuvAB complex. HJ branch migration allows RuvC to scan DNA until it finds its consensus sequence, where it cleaves and resolves the cruciform DNA.</text>
</comment>
<comment type="subunit">
    <text evidence="1">Homotetramer. Forms an RuvA(8)-RuvB(12)-Holliday junction (HJ) complex. HJ DNA is sandwiched between 2 RuvA tetramers; dsDNA enters through RuvA and exits via RuvB. An RuvB hexamer assembles on each DNA strand where it exits the tetramer. Each RuvB hexamer is contacted by two RuvA subunits (via domain III) on 2 adjacent RuvB subunits; this complex drives branch migration. In the full resolvosome a probable DNA-RuvA(4)-RuvB(12)-RuvC(2) complex forms which resolves the HJ.</text>
</comment>
<comment type="subcellular location">
    <subcellularLocation>
        <location evidence="1">Cytoplasm</location>
    </subcellularLocation>
</comment>
<comment type="domain">
    <text evidence="1">Has three domains with a flexible linker between the domains II and III and assumes an 'L' shape. Domain III is highly mobile and contacts RuvB.</text>
</comment>
<comment type="similarity">
    <text evidence="1">Belongs to the RuvA family.</text>
</comment>